<dbReference type="EC" id="2.7.11.1"/>
<dbReference type="EMBL" id="AF061943">
    <property type="protein sequence ID" value="AAD45616.1"/>
    <property type="molecule type" value="mRNA"/>
</dbReference>
<dbReference type="EMBL" id="AF263313">
    <property type="protein sequence ID" value="AAG38503.1"/>
    <property type="molecule type" value="mRNA"/>
</dbReference>
<dbReference type="EMBL" id="AB020688">
    <property type="protein sequence ID" value="BAA74904.2"/>
    <property type="status" value="ALT_INIT"/>
    <property type="molecule type" value="mRNA"/>
</dbReference>
<dbReference type="EMBL" id="AK291473">
    <property type="protein sequence ID" value="BAF84162.1"/>
    <property type="molecule type" value="mRNA"/>
</dbReference>
<dbReference type="EMBL" id="AL137701">
    <property type="protein sequence ID" value="CAB70882.1"/>
    <property type="molecule type" value="mRNA"/>
</dbReference>
<dbReference type="EMBL" id="AC093512">
    <property type="status" value="NOT_ANNOTATED_CDS"/>
    <property type="molecule type" value="Genomic_DNA"/>
</dbReference>
<dbReference type="EMBL" id="CH471238">
    <property type="protein sequence ID" value="EAW79963.1"/>
    <property type="molecule type" value="Genomic_DNA"/>
</dbReference>
<dbReference type="EMBL" id="CH471238">
    <property type="protein sequence ID" value="EAW79964.1"/>
    <property type="molecule type" value="Genomic_DNA"/>
</dbReference>
<dbReference type="EMBL" id="BC136653">
    <property type="protein sequence ID" value="AAI36654.1"/>
    <property type="molecule type" value="mRNA"/>
</dbReference>
<dbReference type="EMBL" id="BC136655">
    <property type="protein sequence ID" value="AAI36656.1"/>
    <property type="molecule type" value="mRNA"/>
</dbReference>
<dbReference type="EMBL" id="BC142663">
    <property type="protein sequence ID" value="AAI42664.1"/>
    <property type="molecule type" value="mRNA"/>
</dbReference>
<dbReference type="EMBL" id="BC144344">
    <property type="protein sequence ID" value="AAI44345.1"/>
    <property type="molecule type" value="mRNA"/>
</dbReference>
<dbReference type="EMBL" id="BC151221">
    <property type="protein sequence ID" value="AAI51222.1"/>
    <property type="molecule type" value="mRNA"/>
</dbReference>
<dbReference type="EMBL" id="BC152413">
    <property type="protein sequence ID" value="AAI52414.1"/>
    <property type="molecule type" value="mRNA"/>
</dbReference>
<dbReference type="EMBL" id="AY358942">
    <property type="protein sequence ID" value="AAQ89301.1"/>
    <property type="status" value="ALT_INIT"/>
    <property type="molecule type" value="mRNA"/>
</dbReference>
<dbReference type="CCDS" id="CCDS10662.1">
    <molecule id="Q9UL54-2"/>
</dbReference>
<dbReference type="CCDS" id="CCDS10663.1">
    <molecule id="Q9UL54-1"/>
</dbReference>
<dbReference type="CCDS" id="CCDS58448.1">
    <molecule id="Q9UL54-4"/>
</dbReference>
<dbReference type="PIR" id="T46444">
    <property type="entry name" value="T46444"/>
</dbReference>
<dbReference type="RefSeq" id="NP_001238972.1">
    <molecule id="Q9UL54-4"/>
    <property type="nucleotide sequence ID" value="NM_001252043.2"/>
</dbReference>
<dbReference type="RefSeq" id="NP_004774.1">
    <molecule id="Q9UL54-2"/>
    <property type="nucleotide sequence ID" value="NM_004783.4"/>
</dbReference>
<dbReference type="RefSeq" id="NP_057235.2">
    <molecule id="Q9UL54-1"/>
    <property type="nucleotide sequence ID" value="NM_016151.3"/>
</dbReference>
<dbReference type="SMR" id="Q9UL54"/>
<dbReference type="BioGRID" id="114750">
    <property type="interactions" value="77"/>
</dbReference>
<dbReference type="FunCoup" id="Q9UL54">
    <property type="interactions" value="2709"/>
</dbReference>
<dbReference type="IntAct" id="Q9UL54">
    <property type="interactions" value="58"/>
</dbReference>
<dbReference type="MINT" id="Q9UL54"/>
<dbReference type="STRING" id="9606.ENSP00000310094"/>
<dbReference type="BindingDB" id="Q9UL54"/>
<dbReference type="ChEMBL" id="CHEMBL1075195"/>
<dbReference type="DrugBank" id="DB04522">
    <property type="generic name" value="Dexfosfoserine"/>
</dbReference>
<dbReference type="DrugBank" id="DB12010">
    <property type="generic name" value="Fostamatinib"/>
</dbReference>
<dbReference type="DrugCentral" id="Q9UL54"/>
<dbReference type="GuidetoPHARMACOLOGY" id="2234"/>
<dbReference type="GlyGen" id="Q9UL54">
    <property type="glycosylation" value="1 site, 1 O-linked glycan (1 site)"/>
</dbReference>
<dbReference type="iPTMnet" id="Q9UL54"/>
<dbReference type="PhosphoSitePlus" id="Q9UL54"/>
<dbReference type="SwissPalm" id="Q9UL54"/>
<dbReference type="BioMuta" id="TAOK2"/>
<dbReference type="DMDM" id="116242813"/>
<dbReference type="jPOST" id="Q9UL54"/>
<dbReference type="MassIVE" id="Q9UL54"/>
<dbReference type="PaxDb" id="9606-ENSP00000310094"/>
<dbReference type="PeptideAtlas" id="Q9UL54"/>
<dbReference type="ProteomicsDB" id="7250"/>
<dbReference type="ProteomicsDB" id="84953">
    <molecule id="Q9UL54-1"/>
</dbReference>
<dbReference type="ProteomicsDB" id="84954">
    <molecule id="Q9UL54-2"/>
</dbReference>
<dbReference type="ProteomicsDB" id="84955">
    <molecule id="Q9UL54-3"/>
</dbReference>
<dbReference type="Pumba" id="Q9UL54"/>
<dbReference type="Antibodypedia" id="2082">
    <property type="antibodies" value="229 antibodies from 36 providers"/>
</dbReference>
<dbReference type="DNASU" id="9344"/>
<dbReference type="Ensembl" id="ENST00000279394.7">
    <molecule id="Q9UL54-2"/>
    <property type="protein sequence ID" value="ENSP00000279394.3"/>
    <property type="gene ID" value="ENSG00000149930.18"/>
</dbReference>
<dbReference type="Ensembl" id="ENST00000308893.9">
    <molecule id="Q9UL54-1"/>
    <property type="protein sequence ID" value="ENSP00000310094.4"/>
    <property type="gene ID" value="ENSG00000149930.18"/>
</dbReference>
<dbReference type="Ensembl" id="ENST00000416441.2">
    <molecule id="Q9UL54-3"/>
    <property type="protein sequence ID" value="ENSP00000393048.2"/>
    <property type="gene ID" value="ENSG00000149930.18"/>
</dbReference>
<dbReference type="Ensembl" id="ENST00000543033.5">
    <molecule id="Q9UL54-4"/>
    <property type="protein sequence ID" value="ENSP00000440336.1"/>
    <property type="gene ID" value="ENSG00000149930.18"/>
</dbReference>
<dbReference type="GeneID" id="9344"/>
<dbReference type="KEGG" id="hsa:9344"/>
<dbReference type="MANE-Select" id="ENST00000308893.9">
    <property type="protein sequence ID" value="ENSP00000310094.4"/>
    <property type="RefSeq nucleotide sequence ID" value="NM_016151.4"/>
    <property type="RefSeq protein sequence ID" value="NP_057235.2"/>
</dbReference>
<dbReference type="UCSC" id="uc002dva.3">
    <molecule id="Q9UL54-1"/>
    <property type="organism name" value="human"/>
</dbReference>
<dbReference type="AGR" id="HGNC:16835"/>
<dbReference type="CTD" id="9344"/>
<dbReference type="DisGeNET" id="9344"/>
<dbReference type="GeneCards" id="TAOK2"/>
<dbReference type="HGNC" id="HGNC:16835">
    <property type="gene designation" value="TAOK2"/>
</dbReference>
<dbReference type="HPA" id="ENSG00000149930">
    <property type="expression patterns" value="Low tissue specificity"/>
</dbReference>
<dbReference type="MalaCards" id="TAOK2"/>
<dbReference type="MIM" id="613199">
    <property type="type" value="gene"/>
</dbReference>
<dbReference type="neXtProt" id="NX_Q9UL54"/>
<dbReference type="OpenTargets" id="ENSG00000149930"/>
<dbReference type="PharmGKB" id="PA134907964"/>
<dbReference type="VEuPathDB" id="HostDB:ENSG00000149930"/>
<dbReference type="eggNOG" id="KOG0577">
    <property type="taxonomic scope" value="Eukaryota"/>
</dbReference>
<dbReference type="GeneTree" id="ENSGT00940000159991"/>
<dbReference type="HOGENOM" id="CLU_276301_0_0_1"/>
<dbReference type="InParanoid" id="Q9UL54"/>
<dbReference type="OMA" id="QKKEYKH"/>
<dbReference type="OrthoDB" id="10016527at2759"/>
<dbReference type="PAN-GO" id="Q9UL54">
    <property type="GO annotations" value="6 GO annotations based on evolutionary models"/>
</dbReference>
<dbReference type="PhylomeDB" id="Q9UL54"/>
<dbReference type="TreeFam" id="TF351444"/>
<dbReference type="PathwayCommons" id="Q9UL54"/>
<dbReference type="SignaLink" id="Q9UL54"/>
<dbReference type="SIGNOR" id="Q9UL54"/>
<dbReference type="BioGRID-ORCS" id="9344">
    <property type="hits" value="15 hits in 1202 CRISPR screens"/>
</dbReference>
<dbReference type="CD-CODE" id="FB4E32DD">
    <property type="entry name" value="Presynaptic clusters and postsynaptic densities"/>
</dbReference>
<dbReference type="ChiTaRS" id="TAOK2">
    <property type="organism name" value="human"/>
</dbReference>
<dbReference type="GeneWiki" id="TAOK2"/>
<dbReference type="GenomeRNAi" id="9344"/>
<dbReference type="Pharos" id="Q9UL54">
    <property type="development level" value="Tchem"/>
</dbReference>
<dbReference type="PRO" id="PR:Q9UL54"/>
<dbReference type="Proteomes" id="UP000005640">
    <property type="component" value="Chromosome 16"/>
</dbReference>
<dbReference type="RNAct" id="Q9UL54">
    <property type="molecule type" value="protein"/>
</dbReference>
<dbReference type="Bgee" id="ENSG00000149930">
    <property type="expression patterns" value="Expressed in right hemisphere of cerebellum and 137 other cell types or tissues"/>
</dbReference>
<dbReference type="GO" id="GO:0015629">
    <property type="term" value="C:actin cytoskeleton"/>
    <property type="evidence" value="ECO:0007669"/>
    <property type="project" value="Ensembl"/>
</dbReference>
<dbReference type="GO" id="GO:0030424">
    <property type="term" value="C:axon"/>
    <property type="evidence" value="ECO:0000250"/>
    <property type="project" value="ARUK-UCL"/>
</dbReference>
<dbReference type="GO" id="GO:0044295">
    <property type="term" value="C:axonal growth cone"/>
    <property type="evidence" value="ECO:0000250"/>
    <property type="project" value="ARUK-UCL"/>
</dbReference>
<dbReference type="GO" id="GO:0005737">
    <property type="term" value="C:cytoplasm"/>
    <property type="evidence" value="ECO:0000318"/>
    <property type="project" value="GO_Central"/>
</dbReference>
<dbReference type="GO" id="GO:0031410">
    <property type="term" value="C:cytoplasmic vesicle"/>
    <property type="evidence" value="ECO:0000314"/>
    <property type="project" value="UniProtKB"/>
</dbReference>
<dbReference type="GO" id="GO:0030659">
    <property type="term" value="C:cytoplasmic vesicle membrane"/>
    <property type="evidence" value="ECO:0007669"/>
    <property type="project" value="UniProtKB-SubCell"/>
</dbReference>
<dbReference type="GO" id="GO:0005829">
    <property type="term" value="C:cytosol"/>
    <property type="evidence" value="ECO:0000314"/>
    <property type="project" value="HPA"/>
</dbReference>
<dbReference type="GO" id="GO:0044294">
    <property type="term" value="C:dendritic growth cone"/>
    <property type="evidence" value="ECO:0000250"/>
    <property type="project" value="ARUK-UCL"/>
</dbReference>
<dbReference type="GO" id="GO:0043005">
    <property type="term" value="C:neuron projection"/>
    <property type="evidence" value="ECO:0000250"/>
    <property type="project" value="ARUK-UCL"/>
</dbReference>
<dbReference type="GO" id="GO:0005730">
    <property type="term" value="C:nucleolus"/>
    <property type="evidence" value="ECO:0000314"/>
    <property type="project" value="HPA"/>
</dbReference>
<dbReference type="GO" id="GO:0005654">
    <property type="term" value="C:nucleoplasm"/>
    <property type="evidence" value="ECO:0000314"/>
    <property type="project" value="HPA"/>
</dbReference>
<dbReference type="GO" id="GO:0043235">
    <property type="term" value="C:receptor complex"/>
    <property type="evidence" value="ECO:0000314"/>
    <property type="project" value="MGI"/>
</dbReference>
<dbReference type="GO" id="GO:0005524">
    <property type="term" value="F:ATP binding"/>
    <property type="evidence" value="ECO:0007669"/>
    <property type="project" value="UniProtKB-KW"/>
</dbReference>
<dbReference type="GO" id="GO:0004709">
    <property type="term" value="F:MAP kinase kinase kinase activity"/>
    <property type="evidence" value="ECO:0000303"/>
    <property type="project" value="ARUK-UCL"/>
</dbReference>
<dbReference type="GO" id="GO:0031434">
    <property type="term" value="F:mitogen-activated protein kinase kinase binding"/>
    <property type="evidence" value="ECO:0000353"/>
    <property type="project" value="UniProtKB"/>
</dbReference>
<dbReference type="GO" id="GO:0038191">
    <property type="term" value="F:neuropilin binding"/>
    <property type="evidence" value="ECO:0000353"/>
    <property type="project" value="ARUK-UCL"/>
</dbReference>
<dbReference type="GO" id="GO:0106310">
    <property type="term" value="F:protein serine kinase activity"/>
    <property type="evidence" value="ECO:0007669"/>
    <property type="project" value="RHEA"/>
</dbReference>
<dbReference type="GO" id="GO:0043539">
    <property type="term" value="F:protein serine/threonine kinase activator activity"/>
    <property type="evidence" value="ECO:0000304"/>
    <property type="project" value="ARUK-UCL"/>
</dbReference>
<dbReference type="GO" id="GO:0004674">
    <property type="term" value="F:protein serine/threonine kinase activity"/>
    <property type="evidence" value="ECO:0000314"/>
    <property type="project" value="UniProtKB"/>
</dbReference>
<dbReference type="GO" id="GO:0048156">
    <property type="term" value="F:tau protein binding"/>
    <property type="evidence" value="ECO:0000303"/>
    <property type="project" value="ARUK-UCL"/>
</dbReference>
<dbReference type="GO" id="GO:0050321">
    <property type="term" value="F:tau-protein kinase activity"/>
    <property type="evidence" value="ECO:0000303"/>
    <property type="project" value="ARUK-UCL"/>
</dbReference>
<dbReference type="GO" id="GO:0030036">
    <property type="term" value="P:actin cytoskeleton organization"/>
    <property type="evidence" value="ECO:0000314"/>
    <property type="project" value="UniProtKB"/>
</dbReference>
<dbReference type="GO" id="GO:0006915">
    <property type="term" value="P:apoptotic process"/>
    <property type="evidence" value="ECO:0000303"/>
    <property type="project" value="UniProtKB"/>
</dbReference>
<dbReference type="GO" id="GO:0007409">
    <property type="term" value="P:axonogenesis"/>
    <property type="evidence" value="ECO:0000316"/>
    <property type="project" value="ARUK-UCL"/>
</dbReference>
<dbReference type="GO" id="GO:0150020">
    <property type="term" value="P:basal dendrite arborization"/>
    <property type="evidence" value="ECO:0000250"/>
    <property type="project" value="ARUK-UCL"/>
</dbReference>
<dbReference type="GO" id="GO:0150019">
    <property type="term" value="P:basal dendrite morphogenesis"/>
    <property type="evidence" value="ECO:0000250"/>
    <property type="project" value="ARUK-UCL"/>
</dbReference>
<dbReference type="GO" id="GO:0016477">
    <property type="term" value="P:cell migration"/>
    <property type="evidence" value="ECO:0000303"/>
    <property type="project" value="UniProtKB"/>
</dbReference>
<dbReference type="GO" id="GO:0006974">
    <property type="term" value="P:DNA damage response"/>
    <property type="evidence" value="ECO:0000314"/>
    <property type="project" value="UniProtKB"/>
</dbReference>
<dbReference type="GO" id="GO:0048041">
    <property type="term" value="P:focal adhesion assembly"/>
    <property type="evidence" value="ECO:0000314"/>
    <property type="project" value="UniProtKB"/>
</dbReference>
<dbReference type="GO" id="GO:0007095">
    <property type="term" value="P:mitotic G2 DNA damage checkpoint signaling"/>
    <property type="evidence" value="ECO:0000315"/>
    <property type="project" value="UniProtKB"/>
</dbReference>
<dbReference type="GO" id="GO:0046330">
    <property type="term" value="P:positive regulation of JNK cascade"/>
    <property type="evidence" value="ECO:0000314"/>
    <property type="project" value="UniProtKB"/>
</dbReference>
<dbReference type="GO" id="GO:0043410">
    <property type="term" value="P:positive regulation of MAPK cascade"/>
    <property type="evidence" value="ECO:0000314"/>
    <property type="project" value="UniProtKB"/>
</dbReference>
<dbReference type="GO" id="GO:0032874">
    <property type="term" value="P:positive regulation of stress-activated MAPK cascade"/>
    <property type="evidence" value="ECO:0000315"/>
    <property type="project" value="UniProtKB"/>
</dbReference>
<dbReference type="GO" id="GO:0006612">
    <property type="term" value="P:protein targeting to membrane"/>
    <property type="evidence" value="ECO:0000303"/>
    <property type="project" value="UniProtKB"/>
</dbReference>
<dbReference type="GO" id="GO:0032956">
    <property type="term" value="P:regulation of actin cytoskeleton organization"/>
    <property type="evidence" value="ECO:0000250"/>
    <property type="project" value="ARUK-UCL"/>
</dbReference>
<dbReference type="GO" id="GO:0001558">
    <property type="term" value="P:regulation of cell growth"/>
    <property type="evidence" value="ECO:0000303"/>
    <property type="project" value="UniProtKB"/>
</dbReference>
<dbReference type="GO" id="GO:0008360">
    <property type="term" value="P:regulation of cell shape"/>
    <property type="evidence" value="ECO:0000314"/>
    <property type="project" value="UniProtKB"/>
</dbReference>
<dbReference type="GO" id="GO:0051403">
    <property type="term" value="P:stress-activated MAPK cascade"/>
    <property type="evidence" value="ECO:0000314"/>
    <property type="project" value="UniProtKB"/>
</dbReference>
<dbReference type="CDD" id="cd06634">
    <property type="entry name" value="STKc_TAO2"/>
    <property type="match status" value="1"/>
</dbReference>
<dbReference type="FunFam" id="1.10.510.10:FF:001615">
    <property type="entry name" value="Serine/threonine-protein kinase TAO2"/>
    <property type="match status" value="1"/>
</dbReference>
<dbReference type="FunFam" id="3.30.200.20:FF:000029">
    <property type="entry name" value="Serine/threonine-protein kinase TAO2, putative"/>
    <property type="match status" value="1"/>
</dbReference>
<dbReference type="Gene3D" id="3.30.200.20">
    <property type="entry name" value="Phosphorylase Kinase, domain 1"/>
    <property type="match status" value="1"/>
</dbReference>
<dbReference type="Gene3D" id="1.10.510.10">
    <property type="entry name" value="Transferase(Phosphotransferase) domain 1"/>
    <property type="match status" value="1"/>
</dbReference>
<dbReference type="InterPro" id="IPR011009">
    <property type="entry name" value="Kinase-like_dom_sf"/>
</dbReference>
<dbReference type="InterPro" id="IPR000719">
    <property type="entry name" value="Prot_kinase_dom"/>
</dbReference>
<dbReference type="InterPro" id="IPR017441">
    <property type="entry name" value="Protein_kinase_ATP_BS"/>
</dbReference>
<dbReference type="InterPro" id="IPR008271">
    <property type="entry name" value="Ser/Thr_kinase_AS"/>
</dbReference>
<dbReference type="InterPro" id="IPR051234">
    <property type="entry name" value="TAO_STE20_kinase"/>
</dbReference>
<dbReference type="PANTHER" id="PTHR47167">
    <property type="entry name" value="SERINE/THREONINE-PROTEIN KINASE TAO1-LIKE PROTEIN"/>
    <property type="match status" value="1"/>
</dbReference>
<dbReference type="PANTHER" id="PTHR47167:SF6">
    <property type="entry name" value="SERINE_THREONINE-PROTEIN KINASE TAO2"/>
    <property type="match status" value="1"/>
</dbReference>
<dbReference type="Pfam" id="PF00069">
    <property type="entry name" value="Pkinase"/>
    <property type="match status" value="1"/>
</dbReference>
<dbReference type="SMART" id="SM00220">
    <property type="entry name" value="S_TKc"/>
    <property type="match status" value="1"/>
</dbReference>
<dbReference type="SUPFAM" id="SSF56112">
    <property type="entry name" value="Protein kinase-like (PK-like)"/>
    <property type="match status" value="1"/>
</dbReference>
<dbReference type="PROSITE" id="PS00107">
    <property type="entry name" value="PROTEIN_KINASE_ATP"/>
    <property type="match status" value="1"/>
</dbReference>
<dbReference type="PROSITE" id="PS50011">
    <property type="entry name" value="PROTEIN_KINASE_DOM"/>
    <property type="match status" value="1"/>
</dbReference>
<dbReference type="PROSITE" id="PS00108">
    <property type="entry name" value="PROTEIN_KINASE_ST"/>
    <property type="match status" value="1"/>
</dbReference>
<reference key="1">
    <citation type="journal article" date="2000" name="J. Biol. Chem.">
        <title>PSK, a novel STE20-like kinase derived from prostatic carcinoma that activates the JNK MAPK pathway and regulates actin cytoskeletal organisation.</title>
        <authorList>
            <person name="Moore T.M."/>
            <person name="Garg R."/>
            <person name="Johnson C."/>
            <person name="Coptcoat M.J."/>
            <person name="Ridley A.J."/>
            <person name="Morris J.D.H."/>
        </authorList>
    </citation>
    <scope>NUCLEOTIDE SEQUENCE [MRNA] (ISOFORM 1)</scope>
    <scope>FUNCTION</scope>
    <scope>TISSUE SPECIFICITY</scope>
    <scope>MUTAGENESIS OF LYS-57</scope>
    <source>
        <tissue>Mammary carcinoma</tissue>
    </source>
</reference>
<reference key="2">
    <citation type="journal article" date="2003" name="Oncogene">
        <title>Comparative studies of a new subfamily of human Ste20-like kinases: homodimerization, subcellular localization, and selective activation of MKK3 and p38.</title>
        <authorList>
            <person name="Yustein J.T."/>
            <person name="Xia L."/>
            <person name="Kahlenburg J.M."/>
            <person name="Robinson D."/>
            <person name="Templeton D."/>
            <person name="Kung H.-J."/>
        </authorList>
    </citation>
    <scope>NUCLEOTIDE SEQUENCE [MRNA] (ISOFORM 2)</scope>
    <scope>FUNCTION</scope>
    <scope>SELF-ASSOCIATION</scope>
    <scope>TISSUE SPECIFICITY</scope>
    <scope>SUBCELLULAR LOCATION</scope>
</reference>
<reference key="3">
    <citation type="journal article" date="1998" name="DNA Res.">
        <title>Prediction of the coding sequences of unidentified human genes. XII. The complete sequences of 100 new cDNA clones from brain which code for large proteins in vitro.</title>
        <authorList>
            <person name="Nagase T."/>
            <person name="Ishikawa K."/>
            <person name="Suyama M."/>
            <person name="Kikuno R."/>
            <person name="Hirosawa M."/>
            <person name="Miyajima N."/>
            <person name="Tanaka A."/>
            <person name="Kotani H."/>
            <person name="Nomura N."/>
            <person name="Ohara O."/>
        </authorList>
    </citation>
    <scope>NUCLEOTIDE SEQUENCE [LARGE SCALE MRNA] (ISOFORM 2)</scope>
    <source>
        <tissue>Brain</tissue>
    </source>
</reference>
<reference key="4">
    <citation type="journal article" date="2004" name="Nat. Genet.">
        <title>Complete sequencing and characterization of 21,243 full-length human cDNAs.</title>
        <authorList>
            <person name="Ota T."/>
            <person name="Suzuki Y."/>
            <person name="Nishikawa T."/>
            <person name="Otsuki T."/>
            <person name="Sugiyama T."/>
            <person name="Irie R."/>
            <person name="Wakamatsu A."/>
            <person name="Hayashi K."/>
            <person name="Sato H."/>
            <person name="Nagai K."/>
            <person name="Kimura K."/>
            <person name="Makita H."/>
            <person name="Sekine M."/>
            <person name="Obayashi M."/>
            <person name="Nishi T."/>
            <person name="Shibahara T."/>
            <person name="Tanaka T."/>
            <person name="Ishii S."/>
            <person name="Yamamoto J."/>
            <person name="Saito K."/>
            <person name="Kawai Y."/>
            <person name="Isono Y."/>
            <person name="Nakamura Y."/>
            <person name="Nagahari K."/>
            <person name="Murakami K."/>
            <person name="Yasuda T."/>
            <person name="Iwayanagi T."/>
            <person name="Wagatsuma M."/>
            <person name="Shiratori A."/>
            <person name="Sudo H."/>
            <person name="Hosoiri T."/>
            <person name="Kaku Y."/>
            <person name="Kodaira H."/>
            <person name="Kondo H."/>
            <person name="Sugawara M."/>
            <person name="Takahashi M."/>
            <person name="Kanda K."/>
            <person name="Yokoi T."/>
            <person name="Furuya T."/>
            <person name="Kikkawa E."/>
            <person name="Omura Y."/>
            <person name="Abe K."/>
            <person name="Kamihara K."/>
            <person name="Katsuta N."/>
            <person name="Sato K."/>
            <person name="Tanikawa M."/>
            <person name="Yamazaki M."/>
            <person name="Ninomiya K."/>
            <person name="Ishibashi T."/>
            <person name="Yamashita H."/>
            <person name="Murakawa K."/>
            <person name="Fujimori K."/>
            <person name="Tanai H."/>
            <person name="Kimata M."/>
            <person name="Watanabe M."/>
            <person name="Hiraoka S."/>
            <person name="Chiba Y."/>
            <person name="Ishida S."/>
            <person name="Ono Y."/>
            <person name="Takiguchi S."/>
            <person name="Watanabe S."/>
            <person name="Yosida M."/>
            <person name="Hotuta T."/>
            <person name="Kusano J."/>
            <person name="Kanehori K."/>
            <person name="Takahashi-Fujii A."/>
            <person name="Hara H."/>
            <person name="Tanase T.-O."/>
            <person name="Nomura Y."/>
            <person name="Togiya S."/>
            <person name="Komai F."/>
            <person name="Hara R."/>
            <person name="Takeuchi K."/>
            <person name="Arita M."/>
            <person name="Imose N."/>
            <person name="Musashino K."/>
            <person name="Yuuki H."/>
            <person name="Oshima A."/>
            <person name="Sasaki N."/>
            <person name="Aotsuka S."/>
            <person name="Yoshikawa Y."/>
            <person name="Matsunawa H."/>
            <person name="Ichihara T."/>
            <person name="Shiohata N."/>
            <person name="Sano S."/>
            <person name="Moriya S."/>
            <person name="Momiyama H."/>
            <person name="Satoh N."/>
            <person name="Takami S."/>
            <person name="Terashima Y."/>
            <person name="Suzuki O."/>
            <person name="Nakagawa S."/>
            <person name="Senoh A."/>
            <person name="Mizoguchi H."/>
            <person name="Goto Y."/>
            <person name="Shimizu F."/>
            <person name="Wakebe H."/>
            <person name="Hishigaki H."/>
            <person name="Watanabe T."/>
            <person name="Sugiyama A."/>
            <person name="Takemoto M."/>
            <person name="Kawakami B."/>
            <person name="Yamazaki M."/>
            <person name="Watanabe K."/>
            <person name="Kumagai A."/>
            <person name="Itakura S."/>
            <person name="Fukuzumi Y."/>
            <person name="Fujimori Y."/>
            <person name="Komiyama M."/>
            <person name="Tashiro H."/>
            <person name="Tanigami A."/>
            <person name="Fujiwara T."/>
            <person name="Ono T."/>
            <person name="Yamada K."/>
            <person name="Fujii Y."/>
            <person name="Ozaki K."/>
            <person name="Hirao M."/>
            <person name="Ohmori Y."/>
            <person name="Kawabata A."/>
            <person name="Hikiji T."/>
            <person name="Kobatake N."/>
            <person name="Inagaki H."/>
            <person name="Ikema Y."/>
            <person name="Okamoto S."/>
            <person name="Okitani R."/>
            <person name="Kawakami T."/>
            <person name="Noguchi S."/>
            <person name="Itoh T."/>
            <person name="Shigeta K."/>
            <person name="Senba T."/>
            <person name="Matsumura K."/>
            <person name="Nakajima Y."/>
            <person name="Mizuno T."/>
            <person name="Morinaga M."/>
            <person name="Sasaki M."/>
            <person name="Togashi T."/>
            <person name="Oyama M."/>
            <person name="Hata H."/>
            <person name="Watanabe M."/>
            <person name="Komatsu T."/>
            <person name="Mizushima-Sugano J."/>
            <person name="Satoh T."/>
            <person name="Shirai Y."/>
            <person name="Takahashi Y."/>
            <person name="Nakagawa K."/>
            <person name="Okumura K."/>
            <person name="Nagase T."/>
            <person name="Nomura N."/>
            <person name="Kikuchi H."/>
            <person name="Masuho Y."/>
            <person name="Yamashita R."/>
            <person name="Nakai K."/>
            <person name="Yada T."/>
            <person name="Nakamura Y."/>
            <person name="Ohara O."/>
            <person name="Isogai T."/>
            <person name="Sugano S."/>
        </authorList>
    </citation>
    <scope>NUCLEOTIDE SEQUENCE [LARGE SCALE MRNA] (ISOFORM 2)</scope>
    <source>
        <tissue>Fetal brain</tissue>
    </source>
</reference>
<reference key="5">
    <citation type="journal article" date="2007" name="BMC Genomics">
        <title>The full-ORF clone resource of the German cDNA consortium.</title>
        <authorList>
            <person name="Bechtel S."/>
            <person name="Rosenfelder H."/>
            <person name="Duda A."/>
            <person name="Schmidt C.P."/>
            <person name="Ernst U."/>
            <person name="Wellenreuther R."/>
            <person name="Mehrle A."/>
            <person name="Schuster C."/>
            <person name="Bahr A."/>
            <person name="Bloecker H."/>
            <person name="Heubner D."/>
            <person name="Hoerlein A."/>
            <person name="Michel G."/>
            <person name="Wedler H."/>
            <person name="Koehrer K."/>
            <person name="Ottenwaelder B."/>
            <person name="Poustka A."/>
            <person name="Wiemann S."/>
            <person name="Schupp I."/>
        </authorList>
    </citation>
    <scope>NUCLEOTIDE SEQUENCE [LARGE SCALE MRNA] (ISOFORM 3)</scope>
    <source>
        <tissue>Testis</tissue>
    </source>
</reference>
<reference key="6">
    <citation type="journal article" date="2004" name="Nature">
        <title>The sequence and analysis of duplication-rich human chromosome 16.</title>
        <authorList>
            <person name="Martin J."/>
            <person name="Han C."/>
            <person name="Gordon L.A."/>
            <person name="Terry A."/>
            <person name="Prabhakar S."/>
            <person name="She X."/>
            <person name="Xie G."/>
            <person name="Hellsten U."/>
            <person name="Chan Y.M."/>
            <person name="Altherr M."/>
            <person name="Couronne O."/>
            <person name="Aerts A."/>
            <person name="Bajorek E."/>
            <person name="Black S."/>
            <person name="Blumer H."/>
            <person name="Branscomb E."/>
            <person name="Brown N.C."/>
            <person name="Bruno W.J."/>
            <person name="Buckingham J.M."/>
            <person name="Callen D.F."/>
            <person name="Campbell C.S."/>
            <person name="Campbell M.L."/>
            <person name="Campbell E.W."/>
            <person name="Caoile C."/>
            <person name="Challacombe J.F."/>
            <person name="Chasteen L.A."/>
            <person name="Chertkov O."/>
            <person name="Chi H.C."/>
            <person name="Christensen M."/>
            <person name="Clark L.M."/>
            <person name="Cohn J.D."/>
            <person name="Denys M."/>
            <person name="Detter J.C."/>
            <person name="Dickson M."/>
            <person name="Dimitrijevic-Bussod M."/>
            <person name="Escobar J."/>
            <person name="Fawcett J.J."/>
            <person name="Flowers D."/>
            <person name="Fotopulos D."/>
            <person name="Glavina T."/>
            <person name="Gomez M."/>
            <person name="Gonzales E."/>
            <person name="Goodstein D."/>
            <person name="Goodwin L.A."/>
            <person name="Grady D.L."/>
            <person name="Grigoriev I."/>
            <person name="Groza M."/>
            <person name="Hammon N."/>
            <person name="Hawkins T."/>
            <person name="Haydu L."/>
            <person name="Hildebrand C.E."/>
            <person name="Huang W."/>
            <person name="Israni S."/>
            <person name="Jett J."/>
            <person name="Jewett P.B."/>
            <person name="Kadner K."/>
            <person name="Kimball H."/>
            <person name="Kobayashi A."/>
            <person name="Krawczyk M.-C."/>
            <person name="Leyba T."/>
            <person name="Longmire J.L."/>
            <person name="Lopez F."/>
            <person name="Lou Y."/>
            <person name="Lowry S."/>
            <person name="Ludeman T."/>
            <person name="Manohar C.F."/>
            <person name="Mark G.A."/>
            <person name="McMurray K.L."/>
            <person name="Meincke L.J."/>
            <person name="Morgan J."/>
            <person name="Moyzis R.K."/>
            <person name="Mundt M.O."/>
            <person name="Munk A.C."/>
            <person name="Nandkeshwar R.D."/>
            <person name="Pitluck S."/>
            <person name="Pollard M."/>
            <person name="Predki P."/>
            <person name="Parson-Quintana B."/>
            <person name="Ramirez L."/>
            <person name="Rash S."/>
            <person name="Retterer J."/>
            <person name="Ricke D.O."/>
            <person name="Robinson D.L."/>
            <person name="Rodriguez A."/>
            <person name="Salamov A."/>
            <person name="Saunders E.H."/>
            <person name="Scott D."/>
            <person name="Shough T."/>
            <person name="Stallings R.L."/>
            <person name="Stalvey M."/>
            <person name="Sutherland R.D."/>
            <person name="Tapia R."/>
            <person name="Tesmer J.G."/>
            <person name="Thayer N."/>
            <person name="Thompson L.S."/>
            <person name="Tice H."/>
            <person name="Torney D.C."/>
            <person name="Tran-Gyamfi M."/>
            <person name="Tsai M."/>
            <person name="Ulanovsky L.E."/>
            <person name="Ustaszewska A."/>
            <person name="Vo N."/>
            <person name="White P.S."/>
            <person name="Williams A.L."/>
            <person name="Wills P.L."/>
            <person name="Wu J.-R."/>
            <person name="Wu K."/>
            <person name="Yang J."/>
            <person name="DeJong P."/>
            <person name="Bruce D."/>
            <person name="Doggett N.A."/>
            <person name="Deaven L."/>
            <person name="Schmutz J."/>
            <person name="Grimwood J."/>
            <person name="Richardson P."/>
            <person name="Rokhsar D.S."/>
            <person name="Eichler E.E."/>
            <person name="Gilna P."/>
            <person name="Lucas S.M."/>
            <person name="Myers R.M."/>
            <person name="Rubin E.M."/>
            <person name="Pennacchio L.A."/>
        </authorList>
    </citation>
    <scope>NUCLEOTIDE SEQUENCE [LARGE SCALE GENOMIC DNA]</scope>
</reference>
<reference key="7">
    <citation type="submission" date="2005-07" db="EMBL/GenBank/DDBJ databases">
        <authorList>
            <person name="Mural R.J."/>
            <person name="Istrail S."/>
            <person name="Sutton G.G."/>
            <person name="Florea L."/>
            <person name="Halpern A.L."/>
            <person name="Mobarry C.M."/>
            <person name="Lippert R."/>
            <person name="Walenz B."/>
            <person name="Shatkay H."/>
            <person name="Dew I."/>
            <person name="Miller J.R."/>
            <person name="Flanigan M.J."/>
            <person name="Edwards N.J."/>
            <person name="Bolanos R."/>
            <person name="Fasulo D."/>
            <person name="Halldorsson B.V."/>
            <person name="Hannenhalli S."/>
            <person name="Turner R."/>
            <person name="Yooseph S."/>
            <person name="Lu F."/>
            <person name="Nusskern D.R."/>
            <person name="Shue B.C."/>
            <person name="Zheng X.H."/>
            <person name="Zhong F."/>
            <person name="Delcher A.L."/>
            <person name="Huson D.H."/>
            <person name="Kravitz S.A."/>
            <person name="Mouchard L."/>
            <person name="Reinert K."/>
            <person name="Remington K.A."/>
            <person name="Clark A.G."/>
            <person name="Waterman M.S."/>
            <person name="Eichler E.E."/>
            <person name="Adams M.D."/>
            <person name="Hunkapiller M.W."/>
            <person name="Myers E.W."/>
            <person name="Venter J.C."/>
        </authorList>
    </citation>
    <scope>NUCLEOTIDE SEQUENCE [LARGE SCALE GENOMIC DNA]</scope>
</reference>
<reference key="8">
    <citation type="journal article" date="2004" name="Genome Res.">
        <title>The status, quality, and expansion of the NIH full-length cDNA project: the Mammalian Gene Collection (MGC).</title>
        <authorList>
            <consortium name="The MGC Project Team"/>
        </authorList>
    </citation>
    <scope>NUCLEOTIDE SEQUENCE [LARGE SCALE MRNA] (ISOFORMS 1; 2 AND 4)</scope>
</reference>
<reference key="9">
    <citation type="journal article" date="2003" name="Genome Res.">
        <title>The secreted protein discovery initiative (SPDI), a large-scale effort to identify novel human secreted and transmembrane proteins: a bioinformatics assessment.</title>
        <authorList>
            <person name="Clark H.F."/>
            <person name="Gurney A.L."/>
            <person name="Abaya E."/>
            <person name="Baker K."/>
            <person name="Baldwin D.T."/>
            <person name="Brush J."/>
            <person name="Chen J."/>
            <person name="Chow B."/>
            <person name="Chui C."/>
            <person name="Crowley C."/>
            <person name="Currell B."/>
            <person name="Deuel B."/>
            <person name="Dowd P."/>
            <person name="Eaton D."/>
            <person name="Foster J.S."/>
            <person name="Grimaldi C."/>
            <person name="Gu Q."/>
            <person name="Hass P.E."/>
            <person name="Heldens S."/>
            <person name="Huang A."/>
            <person name="Kim H.S."/>
            <person name="Klimowski L."/>
            <person name="Jin Y."/>
            <person name="Johnson S."/>
            <person name="Lee J."/>
            <person name="Lewis L."/>
            <person name="Liao D."/>
            <person name="Mark M.R."/>
            <person name="Robbie E."/>
            <person name="Sanchez C."/>
            <person name="Schoenfeld J."/>
            <person name="Seshagiri S."/>
            <person name="Simmons L."/>
            <person name="Singh J."/>
            <person name="Smith V."/>
            <person name="Stinson J."/>
            <person name="Vagts A."/>
            <person name="Vandlen R.L."/>
            <person name="Watanabe C."/>
            <person name="Wieand D."/>
            <person name="Woods K."/>
            <person name="Xie M.-H."/>
            <person name="Yansura D.G."/>
            <person name="Yi S."/>
            <person name="Yu G."/>
            <person name="Yuan J."/>
            <person name="Zhang M."/>
            <person name="Zhang Z."/>
            <person name="Goddard A.D."/>
            <person name="Wood W.I."/>
            <person name="Godowski P.J."/>
            <person name="Gray A.M."/>
        </authorList>
    </citation>
    <scope>NUCLEOTIDE SEQUENCE [LARGE SCALE MRNA] OF 957-1235 (ISOFORMS 1/3)</scope>
</reference>
<reference key="10">
    <citation type="journal article" date="2001" name="J. Biol. Chem.">
        <title>Regulation of stress-responsive mitogen-activated protein (MAP) kinase pathways by TAO2.</title>
        <authorList>
            <person name="Chen Z."/>
            <person name="Cobb M.H."/>
        </authorList>
    </citation>
    <scope>FUNCTION IN PHOSPHORYLATION OF MAP2K3 AND MAP2K6</scope>
    <scope>INTERACTION WITH MAP2K3 AND MAP2K6</scope>
</reference>
<reference key="11">
    <citation type="journal article" date="2003" name="J. Biol. Chem.">
        <title>The prostate-derived sterile 20-like kinase (PSK) regulates microtubule organization and stability.</title>
        <authorList>
            <person name="Mitsopoulos C."/>
            <person name="Zihni C."/>
            <person name="Garg R."/>
            <person name="Ridley A.J."/>
            <person name="Morris J.D."/>
        </authorList>
    </citation>
    <scope>FUNCTION</scope>
    <scope>SUBCELLULAR LOCATION</scope>
    <scope>INTERACTION WITH TUBULINS</scope>
    <scope>MUTAGENESIS OF LYS-57</scope>
</reference>
<reference key="12">
    <citation type="journal article" date="2003" name="J. Biol. Chem.">
        <title>TAO (thousand-and-one amino acid) protein kinases mediate signaling from carbachol to p38 mitogen-activated protein kinase and ternary complex factors.</title>
        <authorList>
            <person name="Chen Z."/>
            <person name="Raman M."/>
            <person name="Chen L."/>
            <person name="Lee S.F."/>
            <person name="Gilman A.G."/>
            <person name="Cobb M.H."/>
        </authorList>
    </citation>
    <scope>FUNCTION</scope>
</reference>
<reference key="13">
    <citation type="journal article" date="2006" name="J. Biol. Chem.">
        <title>Osmotic stress activates the TAK1-JNK pathway while blocking TAK1-mediated NF-kappaB activation: TAO2 regulates TAK1 pathways.</title>
        <authorList>
            <person name="Huangfu W.C."/>
            <person name="Omori E."/>
            <person name="Akira S."/>
            <person name="Matsumoto K."/>
            <person name="Ninomiya-Tsuji J."/>
        </authorList>
    </citation>
    <scope>FUNCTION</scope>
    <scope>INTERACTION WITH MAP3K7</scope>
    <scope>MUTAGENESIS OF LYS-57 AND ASP-169</scope>
</reference>
<reference key="14">
    <citation type="journal article" date="2007" name="EMBO J.">
        <title>TAO kinases mediate activation of p38 in response to DNA damage.</title>
        <authorList>
            <person name="Raman M."/>
            <person name="Earnest S."/>
            <person name="Zhang K."/>
            <person name="Zhao Y."/>
            <person name="Cobb M.H."/>
        </authorList>
    </citation>
    <scope>FUNCTION</scope>
    <scope>PHOSPHORYLATION BY ATM</scope>
    <scope>INDUCTION</scope>
</reference>
<reference key="15">
    <citation type="journal article" date="2007" name="J. Biol. Chem.">
        <title>Prostate-derived sterile 20-like kinase 1-alpha induces apoptosis. JNK- and caspase-dependent nuclear localization is a requirement for membrane blebbing.</title>
        <authorList>
            <person name="Zihni C."/>
            <person name="Mitsopoulos C."/>
            <person name="Tavares I.A."/>
            <person name="Baum B."/>
            <person name="Ridley A.J."/>
            <person name="Morris J.D."/>
        </authorList>
    </citation>
    <scope>FUNCTION</scope>
    <scope>SUBCELLULAR LOCATION</scope>
    <scope>PHOSPHORYLATION AT SER-181</scope>
    <scope>AUTOPHOSPHORYLATION</scope>
    <scope>MUTAGENESIS OF LYS-57 AND ASP-919</scope>
</reference>
<reference key="16">
    <citation type="journal article" date="2008" name="Mol. Cell">
        <title>Kinase-selective enrichment enables quantitative phosphoproteomics of the kinome across the cell cycle.</title>
        <authorList>
            <person name="Daub H."/>
            <person name="Olsen J.V."/>
            <person name="Bairlein M."/>
            <person name="Gnad F."/>
            <person name="Oppermann F.S."/>
            <person name="Korner R."/>
            <person name="Greff Z."/>
            <person name="Keri G."/>
            <person name="Stemmann O."/>
            <person name="Mann M."/>
        </authorList>
    </citation>
    <scope>PHOSPHORYLATION [LARGE SCALE ANALYSIS] AT SER-9 AND SER-777</scope>
    <scope>IDENTIFICATION BY MASS SPECTROMETRY [LARGE SCALE ANALYSIS]</scope>
    <source>
        <tissue>Cervix carcinoma</tissue>
    </source>
</reference>
<reference key="17">
    <citation type="journal article" date="2009" name="J. Med. Chem.">
        <title>Toward the development of a potent and selective organoruthenium mammalian sterile 20 kinase inhibitor.</title>
        <authorList>
            <person name="Anand R."/>
            <person name="Maksimoska J."/>
            <person name="Pagano N."/>
            <person name="Wong E.Y."/>
            <person name="Gimotty P.A."/>
            <person name="Diamond S.L."/>
            <person name="Meggers E."/>
            <person name="Marmorstein R."/>
        </authorList>
    </citation>
    <scope>ACTIVITY REGULATION</scope>
</reference>
<reference key="18">
    <citation type="journal article" date="2009" name="Mol. Cell. Proteomics">
        <title>Large-scale proteomics analysis of the human kinome.</title>
        <authorList>
            <person name="Oppermann F.S."/>
            <person name="Gnad F."/>
            <person name="Olsen J.V."/>
            <person name="Hornberger R."/>
            <person name="Greff Z."/>
            <person name="Keri G."/>
            <person name="Mann M."/>
            <person name="Daub H."/>
        </authorList>
    </citation>
    <scope>PHOSPHORYLATION [LARGE SCALE ANALYSIS] AT SER-9 AND SER-181</scope>
    <scope>PHOSPHORYLATION [LARGE SCALE ANALYSIS] AT SER-1011 (ISOFORM 2)</scope>
    <scope>IDENTIFICATION BY MASS SPECTROMETRY [LARGE SCALE ANALYSIS]</scope>
</reference>
<reference key="19">
    <citation type="journal article" date="2010" name="Mol. Pharmacol.">
        <title>Arsenic trioxide-dependent activation of thousand-and-one amino acid kinase 2 and transforming growth factor-beta-activated kinase 1.</title>
        <authorList>
            <person name="McNeer J.L."/>
            <person name="Goussetis D.J."/>
            <person name="Sassano A."/>
            <person name="Dolniak B."/>
            <person name="Kroczynska B."/>
            <person name="Glaser H."/>
            <person name="Altman J.K."/>
            <person name="Platanias L.C."/>
        </authorList>
    </citation>
    <scope>ACTIVITY REGULATION</scope>
</reference>
<reference key="20">
    <citation type="journal article" date="2010" name="Sci. Signal.">
        <title>Quantitative phosphoproteomics reveals widespread full phosphorylation site occupancy during mitosis.</title>
        <authorList>
            <person name="Olsen J.V."/>
            <person name="Vermeulen M."/>
            <person name="Santamaria A."/>
            <person name="Kumar C."/>
            <person name="Miller M.L."/>
            <person name="Jensen L.J."/>
            <person name="Gnad F."/>
            <person name="Cox J."/>
            <person name="Jensen T.S."/>
            <person name="Nigg E.A."/>
            <person name="Brunak S."/>
            <person name="Mann M."/>
        </authorList>
    </citation>
    <scope>PHOSPHORYLATION [LARGE SCALE ANALYSIS] AT SER-825 AND SER-827</scope>
    <scope>IDENTIFICATION BY MASS SPECTROMETRY [LARGE SCALE ANALYSIS]</scope>
    <source>
        <tissue>Cervix carcinoma</tissue>
    </source>
</reference>
<reference key="21">
    <citation type="journal article" date="2011" name="BMC Syst. Biol.">
        <title>Initial characterization of the human central proteome.</title>
        <authorList>
            <person name="Burkard T.R."/>
            <person name="Planyavsky M."/>
            <person name="Kaupe I."/>
            <person name="Breitwieser F.P."/>
            <person name="Buerckstuemmer T."/>
            <person name="Bennett K.L."/>
            <person name="Superti-Furga G."/>
            <person name="Colinge J."/>
        </authorList>
    </citation>
    <scope>IDENTIFICATION BY MASS SPECTROMETRY [LARGE SCALE ANALYSIS]</scope>
</reference>
<reference key="22">
    <citation type="journal article" date="2013" name="J. Proteome Res.">
        <title>Toward a comprehensive characterization of a human cancer cell phosphoproteome.</title>
        <authorList>
            <person name="Zhou H."/>
            <person name="Di Palma S."/>
            <person name="Preisinger C."/>
            <person name="Peng M."/>
            <person name="Polat A.N."/>
            <person name="Heck A.J."/>
            <person name="Mohammed S."/>
        </authorList>
    </citation>
    <scope>PHOSPHORYLATION [LARGE SCALE ANALYSIS] AT SER-9 AND SER-827</scope>
    <scope>IDENTIFICATION BY MASS SPECTROMETRY [LARGE SCALE ANALYSIS]</scope>
    <source>
        <tissue>Cervix carcinoma</tissue>
        <tissue>Erythroleukemia</tissue>
    </source>
</reference>
<reference key="23">
    <citation type="journal article" date="2014" name="J. Proteomics">
        <title>An enzyme assisted RP-RPLC approach for in-depth analysis of human liver phosphoproteome.</title>
        <authorList>
            <person name="Bian Y."/>
            <person name="Song C."/>
            <person name="Cheng K."/>
            <person name="Dong M."/>
            <person name="Wang F."/>
            <person name="Huang J."/>
            <person name="Sun D."/>
            <person name="Wang L."/>
            <person name="Ye M."/>
            <person name="Zou H."/>
        </authorList>
    </citation>
    <scope>PHOSPHORYLATION [LARGE SCALE ANALYSIS] AT SER-414</scope>
    <scope>IDENTIFICATION BY MASS SPECTROMETRY [LARGE SCALE ANALYSIS]</scope>
    <source>
        <tissue>Liver</tissue>
    </source>
</reference>
<comment type="function">
    <text evidence="7 8 9 10 11 12 13 14">Serine/threonine-protein kinase involved in different processes such as membrane blebbing and apoptotic bodies formation DNA damage response and MAPK14/p38 MAPK stress-activated MAPK cascade. Phosphorylates itself, MBP, activated MAPK8, MAP2K3, MAP2K6 and tubulins. Activates the MAPK14/p38 MAPK signaling pathway through the specific activation and phosphorylation of the upstream MAP2K3 and MAP2K6 kinases. In response to DNA damage, involved in the G2/M transition DNA damage checkpoint by activating the p38/MAPK14 stress-activated MAPK cascade, probably by mediating phosphorylation of upstream MAP2K3 and MAP2K6 kinases. Isoform 1, but not isoform 2, plays a role in apoptotic morphological changes, including cell contraction, membrane blebbing and apoptotic bodies formation. This function, which requires the activation of MAPK8/JNK and nuclear localization of C-terminally truncated isoform 1, may be linked to the mitochondrial CASP9-associated death pathway. Isoform 1 binds to microtubules and affects their organization and stability independently of its kinase activity. Prevents MAP3K7-mediated activation of CHUK, and thus NF-kappa-B activation, but not that of MAPK8/JNK. May play a role in the osmotic stress-MAPK8 pathway. Isoform 2, but not isoform 1, is required for PCDH8 endocytosis. Following homophilic interactions between PCDH8 extracellular domains, isoform 2 phosphorylates and activates MAPK14/p38 MAPK which in turn phosphorylates isoform 2. This process leads to PCDH8 endocytosis and CDH2 cointernalization. Both isoforms are involved in MAPK14 phosphorylation.</text>
</comment>
<comment type="catalytic activity">
    <reaction>
        <text>L-seryl-[protein] + ATP = O-phospho-L-seryl-[protein] + ADP + H(+)</text>
        <dbReference type="Rhea" id="RHEA:17989"/>
        <dbReference type="Rhea" id="RHEA-COMP:9863"/>
        <dbReference type="Rhea" id="RHEA-COMP:11604"/>
        <dbReference type="ChEBI" id="CHEBI:15378"/>
        <dbReference type="ChEBI" id="CHEBI:29999"/>
        <dbReference type="ChEBI" id="CHEBI:30616"/>
        <dbReference type="ChEBI" id="CHEBI:83421"/>
        <dbReference type="ChEBI" id="CHEBI:456216"/>
        <dbReference type="EC" id="2.7.11.1"/>
    </reaction>
</comment>
<comment type="catalytic activity">
    <reaction>
        <text>L-threonyl-[protein] + ATP = O-phospho-L-threonyl-[protein] + ADP + H(+)</text>
        <dbReference type="Rhea" id="RHEA:46608"/>
        <dbReference type="Rhea" id="RHEA-COMP:11060"/>
        <dbReference type="Rhea" id="RHEA-COMP:11605"/>
        <dbReference type="ChEBI" id="CHEBI:15378"/>
        <dbReference type="ChEBI" id="CHEBI:30013"/>
        <dbReference type="ChEBI" id="CHEBI:30616"/>
        <dbReference type="ChEBI" id="CHEBI:61977"/>
        <dbReference type="ChEBI" id="CHEBI:456216"/>
        <dbReference type="EC" id="2.7.11.1"/>
    </reaction>
</comment>
<comment type="cofactor">
    <cofactor evidence="1">
        <name>Mg(2+)</name>
        <dbReference type="ChEBI" id="CHEBI:18420"/>
    </cofactor>
</comment>
<comment type="activity regulation">
    <text evidence="15 16">Selectively inhibited by the enantiopure organoruthenium inhibitor 9E1. Activated following arsenic trioxide (As(2)O(3)) treatment.</text>
</comment>
<comment type="subunit">
    <text evidence="1">Interacts with MAP2K3 and MAP2K6 (By similarity). Self-associates. Interacts with tubulins through the C-terminal domain. Interacts with MAP3K7 and interferes with MAP3K7-binding to CHUK and thus prevents NF-kappa-B activation. Isoform 2 interacts with PCDH8; this complex may also include CDH2 (By similarity).</text>
</comment>
<comment type="interaction">
    <interactant intactId="EBI-352832">
        <id>Q9UL54</id>
    </interactant>
    <interactant intactId="EBI-7062247">
        <id>Q9UHD4</id>
        <label>CIDEB</label>
    </interactant>
    <organismsDiffer>false</organismsDiffer>
    <experiments>3</experiments>
</comment>
<comment type="interaction">
    <interactant intactId="EBI-352832">
        <id>Q9UL54</id>
    </interactant>
    <interactant intactId="EBI-22311199">
        <id>Q3LI67</id>
        <label>KRTAP6-3</label>
    </interactant>
    <organismsDiffer>false</organismsDiffer>
    <experiments>3</experiments>
</comment>
<comment type="interaction">
    <interactant intactId="EBI-352832">
        <id>Q9UL54</id>
    </interactant>
    <interactant intactId="EBI-726739">
        <id>Q9UPY8</id>
        <label>MAPRE3</label>
    </interactant>
    <organismsDiffer>false</organismsDiffer>
    <experiments>3</experiments>
</comment>
<comment type="subcellular location">
    <subcellularLocation>
        <location evidence="22">Cytoplasmic vesicle membrane</location>
        <topology evidence="22">Multi-pass membrane protein</topology>
    </subcellularLocation>
    <subcellularLocation>
        <location>Cytoplasm</location>
        <location>Cytoskeleton</location>
    </subcellularLocation>
    <subcellularLocation>
        <location>Nucleus</location>
    </subcellularLocation>
    <text>Catalytically active full-length phosphorylated isoform 1 localizes to microtubules in the cytoplasm predominantly on microtubule cables positioned around the nucleus. A C-terminally truncated form of isoform 1 is present in the nucleus; isoform 2 and kinase-defective, as well as full-length isoform 1 are excluded from the nucleus.</text>
</comment>
<comment type="subcellular location">
    <molecule>Isoform 2</molecule>
    <subcellularLocation>
        <location>Cell projection</location>
        <location>Dendrite</location>
    </subcellularLocation>
    <text evidence="1">In dendrites, colocalizes with PCDH8.</text>
</comment>
<comment type="alternative products">
    <event type="alternative splicing"/>
    <isoform>
        <id>Q9UL54-1</id>
        <name>1</name>
        <name>PSK1-alpha</name>
        <name>TAO2</name>
        <sequence type="displayed"/>
    </isoform>
    <isoform>
        <id>Q9UL54-2</id>
        <name>2</name>
        <name>PSK1-beta</name>
        <sequence type="described" ref="VSP_015969 VSP_015970"/>
    </isoform>
    <isoform>
        <id>Q9UL54-3</id>
        <name>3</name>
        <sequence type="described" ref="VSP_015967 VSP_015968"/>
    </isoform>
    <isoform>
        <id>Q9UL54-4</id>
        <name>4</name>
        <sequence type="described" ref="VSP_044894"/>
    </isoform>
</comment>
<comment type="tissue specificity">
    <text evidence="7 11">Ubiquitously expressed, with a higher level of expression in testis and brain.</text>
</comment>
<comment type="PTM">
    <text>Isoforms 1 and 2 are autophosphorylated.</text>
</comment>
<comment type="PTM">
    <text>C-terminal cleavage of isoform 1 and subsequent nuclear localization requires CASP9 activity.</text>
</comment>
<comment type="PTM">
    <text>Autophosphorylated. Phosphorylated by ATM.</text>
</comment>
<comment type="PTM">
    <molecule>Isoform 2</molecule>
    <text evidence="1">Phosphorylated on Ser-1031 by MAPK14. This phosphorylation is required PCDH8 for endocytosis (By similarity).</text>
</comment>
<comment type="similarity">
    <text evidence="22">Belongs to the protein kinase superfamily. STE Ser/Thr protein kinase family. STE20 subfamily.</text>
</comment>
<comment type="sequence caution" evidence="22">
    <conflict type="erroneous initiation">
        <sequence resource="EMBL-CDS" id="AAQ89301"/>
    </conflict>
    <text>Truncated N-terminus.</text>
</comment>
<comment type="sequence caution" evidence="22">
    <conflict type="erroneous initiation">
        <sequence resource="EMBL-CDS" id="BAA74904"/>
    </conflict>
    <text>Extended N-terminus.</text>
</comment>
<name>TAOK2_HUMAN</name>
<organism>
    <name type="scientific">Homo sapiens</name>
    <name type="common">Human</name>
    <dbReference type="NCBI Taxonomy" id="9606"/>
    <lineage>
        <taxon>Eukaryota</taxon>
        <taxon>Metazoa</taxon>
        <taxon>Chordata</taxon>
        <taxon>Craniata</taxon>
        <taxon>Vertebrata</taxon>
        <taxon>Euteleostomi</taxon>
        <taxon>Mammalia</taxon>
        <taxon>Eutheria</taxon>
        <taxon>Euarchontoglires</taxon>
        <taxon>Primates</taxon>
        <taxon>Haplorrhini</taxon>
        <taxon>Catarrhini</taxon>
        <taxon>Hominidae</taxon>
        <taxon>Homo</taxon>
    </lineage>
</organism>
<protein>
    <recommendedName>
        <fullName>Serine/threonine-protein kinase TAO2</fullName>
        <ecNumber>2.7.11.1</ecNumber>
    </recommendedName>
    <alternativeName>
        <fullName>Kinase from chicken homolog C</fullName>
        <shortName>hKFC-C</shortName>
    </alternativeName>
    <alternativeName>
        <fullName>Prostate-derived sterile 20-like kinase 1</fullName>
        <shortName>PSK-1</shortName>
        <shortName>PSK1</shortName>
        <shortName>Prostate-derived STE20-like kinase 1</shortName>
    </alternativeName>
    <alternativeName>
        <fullName>Thousand and one amino acid protein kinase 2</fullName>
    </alternativeName>
</protein>
<evidence type="ECO:0000250" key="1"/>
<evidence type="ECO:0000250" key="2">
    <source>
        <dbReference type="UniProtKB" id="Q6ZQ29"/>
    </source>
</evidence>
<evidence type="ECO:0000255" key="3"/>
<evidence type="ECO:0000255" key="4">
    <source>
        <dbReference type="PROSITE-ProRule" id="PRU00159"/>
    </source>
</evidence>
<evidence type="ECO:0000255" key="5">
    <source>
        <dbReference type="PROSITE-ProRule" id="PRU10027"/>
    </source>
</evidence>
<evidence type="ECO:0000256" key="6">
    <source>
        <dbReference type="SAM" id="MobiDB-lite"/>
    </source>
</evidence>
<evidence type="ECO:0000269" key="7">
    <source>
    </source>
</evidence>
<evidence type="ECO:0000269" key="8">
    <source>
    </source>
</evidence>
<evidence type="ECO:0000269" key="9">
    <source>
    </source>
</evidence>
<evidence type="ECO:0000269" key="10">
    <source>
    </source>
</evidence>
<evidence type="ECO:0000269" key="11">
    <source>
    </source>
</evidence>
<evidence type="ECO:0000269" key="12">
    <source>
    </source>
</evidence>
<evidence type="ECO:0000269" key="13">
    <source>
    </source>
</evidence>
<evidence type="ECO:0000269" key="14">
    <source>
    </source>
</evidence>
<evidence type="ECO:0000269" key="15">
    <source>
    </source>
</evidence>
<evidence type="ECO:0000269" key="16">
    <source>
    </source>
</evidence>
<evidence type="ECO:0000303" key="17">
    <source>
    </source>
</evidence>
<evidence type="ECO:0000303" key="18">
    <source>
    </source>
</evidence>
<evidence type="ECO:0000303" key="19">
    <source>
    </source>
</evidence>
<evidence type="ECO:0000303" key="20">
    <source>
    </source>
</evidence>
<evidence type="ECO:0000303" key="21">
    <source>
    </source>
</evidence>
<evidence type="ECO:0000305" key="22"/>
<evidence type="ECO:0007744" key="23">
    <source>
    </source>
</evidence>
<evidence type="ECO:0007744" key="24">
    <source>
    </source>
</evidence>
<evidence type="ECO:0007744" key="25">
    <source>
    </source>
</evidence>
<evidence type="ECO:0007744" key="26">
    <source>
    </source>
</evidence>
<evidence type="ECO:0007744" key="27">
    <source>
    </source>
</evidence>
<gene>
    <name type="primary">TAOK2</name>
    <name type="synonym">KIAA0881</name>
    <name type="synonym">MAP3K17</name>
    <name type="synonym">PSK</name>
    <name type="synonym">PSK1</name>
    <name type="ORF">UNQ2971/PRO7431</name>
</gene>
<proteinExistence type="evidence at protein level"/>
<feature type="chain" id="PRO_0000086733" description="Serine/threonine-protein kinase TAO2">
    <location>
        <begin position="1"/>
        <end position="1235"/>
    </location>
</feature>
<feature type="transmembrane region" description="Helical" evidence="3">
    <location>
        <begin position="965"/>
        <end position="985"/>
    </location>
</feature>
<feature type="transmembrane region" description="Helical" evidence="3">
    <location>
        <begin position="987"/>
        <end position="1007"/>
    </location>
</feature>
<feature type="transmembrane region" description="Helical" evidence="3">
    <location>
        <begin position="1012"/>
        <end position="1032"/>
    </location>
</feature>
<feature type="transmembrane region" description="Helical" evidence="3">
    <location>
        <begin position="1043"/>
        <end position="1063"/>
    </location>
</feature>
<feature type="transmembrane region" description="Helical" evidence="3">
    <location>
        <begin position="1166"/>
        <end position="1186"/>
    </location>
</feature>
<feature type="domain" description="Protein kinase" evidence="4">
    <location>
        <begin position="28"/>
        <end position="281"/>
    </location>
</feature>
<feature type="region of interest" description="Disordered" evidence="6">
    <location>
        <begin position="318"/>
        <end position="457"/>
    </location>
</feature>
<feature type="region of interest" description="Disordered" evidence="6">
    <location>
        <begin position="732"/>
        <end position="777"/>
    </location>
</feature>
<feature type="region of interest" description="Disordered" evidence="6">
    <location>
        <begin position="804"/>
        <end position="835"/>
    </location>
</feature>
<feature type="region of interest" description="Disordered" evidence="6">
    <location>
        <begin position="891"/>
        <end position="939"/>
    </location>
</feature>
<feature type="region of interest" description="Disordered" evidence="6">
    <location>
        <begin position="1198"/>
        <end position="1235"/>
    </location>
</feature>
<feature type="coiled-coil region" evidence="3">
    <location>
        <begin position="486"/>
        <end position="547"/>
    </location>
</feature>
<feature type="coiled-coil region" evidence="3">
    <location>
        <begin position="574"/>
        <end position="601"/>
    </location>
</feature>
<feature type="coiled-coil region" evidence="3">
    <location>
        <begin position="681"/>
        <end position="713"/>
    </location>
</feature>
<feature type="compositionally biased region" description="Low complexity" evidence="6">
    <location>
        <begin position="350"/>
        <end position="374"/>
    </location>
</feature>
<feature type="compositionally biased region" description="Acidic residues" evidence="6">
    <location>
        <begin position="375"/>
        <end position="393"/>
    </location>
</feature>
<feature type="compositionally biased region" description="Basic and acidic residues" evidence="6">
    <location>
        <begin position="394"/>
        <end position="409"/>
    </location>
</feature>
<feature type="compositionally biased region" description="Polar residues" evidence="6">
    <location>
        <begin position="766"/>
        <end position="777"/>
    </location>
</feature>
<feature type="compositionally biased region" description="Acidic residues" evidence="6">
    <location>
        <begin position="899"/>
        <end position="908"/>
    </location>
</feature>
<feature type="compositionally biased region" description="Pro residues" evidence="6">
    <location>
        <begin position="924"/>
        <end position="934"/>
    </location>
</feature>
<feature type="active site" description="Proton acceptor" evidence="4 5">
    <location>
        <position position="151"/>
    </location>
</feature>
<feature type="binding site" evidence="4">
    <location>
        <begin position="34"/>
        <end position="42"/>
    </location>
    <ligand>
        <name>ATP</name>
        <dbReference type="ChEBI" id="CHEBI:30616"/>
    </ligand>
</feature>
<feature type="binding site" evidence="4">
    <location>
        <position position="57"/>
    </location>
    <ligand>
        <name>ATP</name>
        <dbReference type="ChEBI" id="CHEBI:30616"/>
    </ligand>
</feature>
<feature type="modified residue" description="Phosphoserine" evidence="23 24 26">
    <location>
        <position position="9"/>
    </location>
</feature>
<feature type="modified residue" description="Phosphoserine" evidence="13 24">
    <location>
        <position position="181"/>
    </location>
</feature>
<feature type="modified residue" description="Phosphoserine" evidence="27">
    <location>
        <position position="414"/>
    </location>
</feature>
<feature type="modified residue" description="Phosphoserine" evidence="2">
    <location>
        <position position="656"/>
    </location>
</feature>
<feature type="modified residue" description="Phosphoserine" evidence="23">
    <location>
        <position position="777"/>
    </location>
</feature>
<feature type="modified residue" description="Phosphoserine" evidence="25">
    <location>
        <position position="825"/>
    </location>
</feature>
<feature type="modified residue" description="Phosphoserine" evidence="25 26">
    <location>
        <position position="827"/>
    </location>
</feature>
<feature type="splice variant" id="VSP_015967" description="In isoform 3." evidence="21">
    <location>
        <begin position="1"/>
        <end position="173"/>
    </location>
</feature>
<feature type="splice variant" id="VSP_015968" description="In isoform 3." evidence="21">
    <original>SIMAPANSFVGTPYWMAPEVILAMDEGQYDGKVDVWSLGITCIEL</original>
    <variation>MMGTSQGHVARKSRNWGLNPSRLSSIPLSSTPCHLSPSSLSPFSV</variation>
    <location>
        <begin position="174"/>
        <end position="218"/>
    </location>
</feature>
<feature type="splice variant" id="VSP_015969" description="In isoform 2." evidence="17 18 19 20">
    <original>VRAGQRPPGLPLPIPGALGPPNTGTPIEQQPCSPGQEAVLDQRMLGEEEEAVGERRILGKEGATLEPKQQRILGEESGAPSPSPQKHGSLVDEEVWGLPEEIEELRVPSLVPQERSIVGQEEAGTWSLWGKEDESLLDEEFELGWVQGPALTPVPEEEEEEEEGAPIGTPRDPGDGCPSPDIPPEPPPTHLRPCPASQLPGLLSHGLLAGLSFAVGSSSGLLPLLLLLLLPLLAAQGGGGLQAALLALEVGLVGLGASYLLLCTALHLPSSLFLLLAQGTALGAVLGLSWRRGLMGVPLGLGAAW</original>
    <variation>SKELQIKKQFQETCKIQTRQYKALRAHLLETTPKAQHKSLLKRLKEEQTRKLAILAEQYDQSISEMLSSQALRLDETQEAEFQALRQQLQQELELLNAYQSKIKIRTESQHERELRELEQRVALRRALLEQRVEEELLALQTGRSERIRSLLERQAREIEAFDAESMRLGFSSMALGGIPAEAAAQGYPAPPPAPAWPSRPVPRSGAHWSHGPPPPGMPPPAWRQPSLLAPPGPPNWLGPPTQSGTPRGGALLLLRNSPQPLRRAASGGSGSENVGPPAAAVPGPLSRSTSVASHILNGSSHFYS</variation>
    <location>
        <begin position="745"/>
        <end position="1049"/>
    </location>
</feature>
<feature type="splice variant" id="VSP_044894" description="In isoform 4." evidence="20">
    <location>
        <begin position="745"/>
        <end position="857"/>
    </location>
</feature>
<feature type="splice variant" id="VSP_015970" description="In isoform 2." evidence="17 18 19 20">
    <location>
        <begin position="1050"/>
        <end position="1235"/>
    </location>
</feature>
<feature type="mutagenesis site" description="Loss of kinase activity. In isoform 1, excluded from the nucleus. No effect on microtubule-binding." evidence="7 9 12 13">
    <original>K</original>
    <variation>A</variation>
    <location>
        <position position="57"/>
    </location>
</feature>
<feature type="mutagenesis site" description="Loss of kinase activity; No effect on MAP3K7-mediated activation of NF-kappa-B." evidence="12">
    <original>D</original>
    <variation>A</variation>
    <location>
        <position position="169"/>
    </location>
</feature>
<feature type="mutagenesis site" description="No effect on kinase activity, nor on JNK activation, but severe reduction in nuclear localization and apoptotic membrane blebbing." evidence="13">
    <original>D</original>
    <variation>N</variation>
    <location>
        <position position="919"/>
    </location>
</feature>
<feature type="sequence conflict" description="In Ref. 7; AAI51222/AAI42664." evidence="22" ref="7">
    <original>M</original>
    <variation>T</variation>
    <location>
        <position position="189"/>
    </location>
</feature>
<feature type="sequence conflict" description="In Ref. 1; AAD45616." evidence="22" ref="1">
    <original>R</original>
    <variation>H</variation>
    <location>
        <position position="1211"/>
    </location>
</feature>
<feature type="modified residue" description="Phosphoserine" evidence="24">
    <location sequence="Q9UL54-2">
        <position position="1011"/>
    </location>
</feature>
<feature type="modified residue" description="Phosphoserine" evidence="1">
    <location sequence="Q9UL54-2">
        <position position="1031"/>
    </location>
</feature>
<sequence length="1235" mass="138251">MPAGGRAGSLKDPDVAELFFKDDPEKLFSDLREIGHGSFGAVYFARDVRNSEVVAIKKMSYSGKQSNEKWQDIIKEVRFLQKLRHPNTIQYRGCYLREHTAWLVMEYCLGSASDLLEVHKKPLQEVEIAAVTHGALQGLAYLHSHNMIHRDVKAGNILLSEPGLVKLGDFGSASIMAPANSFVGTPYWMAPEVILAMDEGQYDGKVDVWSLGITCIELAERKPPLFNMNAMSALYHIAQNESPVLQSGHWSEYFRNFVDSCLQKIPQDRPTSEVLLKHRFVLRERPPTVIMDLIQRTKDAVRELDNLQYRKMKKILFQEAPNGPGAEAPEEEEEAEPYMHRAGTLTSLESSHSVPSMSISASSQSSSVNSLADASDNEEEEEEEEEEEEEEEGPEAREMAMMQEGEHTVTSHSSIIHRLPGSDNLYDDPYQPEITPSPLQPPAAPAPTSTTSSARRRAYCRNRDHFATIRTASLVSRQIQEHEQDSALREQLSGYKRMRRQHQKQLLALESRLRGEREEHSARLQRELEAQRAGFGAEAEKLARRHQAIGEKEARAAQAEERKFQQHILGQQKKELAALLEAQKRTYKLRKEQLKEELQENPSTPKREKAEWLLRQKEQLQQCQAEEEAGLLRRQRQYFELQCRQYKRKMLLARHSLDQDLLREDLNKKQTQKDLECALLLRQHEATRELELRQLQAVQRTRAELTRLQHQTELGNQLEYNKRREQELRQKHAAQVRQQPKSLKVRAGQRPPGLPLPIPGALGPPNTGTPIEQQPCSPGQEAVLDQRMLGEEEEAVGERRILGKEGATLEPKQQRILGEESGAPSPSPQKHGSLVDEEVWGLPEEIEELRVPSLVPQERSIVGQEEAGTWSLWGKEDESLLDEEFELGWVQGPALTPVPEEEEEEEEGAPIGTPRDPGDGCPSPDIPPEPPPTHLRPCPASQLPGLLSHGLLAGLSFAVGSSSGLLPLLLLLLLPLLAAQGGGGLQAALLALEVGLVGLGASYLLLCTALHLPSSLFLLLAQGTALGAVLGLSWRRGLMGVPLGLGAAWLLAWPGLALPLVAMAAGGRWVRQQGPRVRRGISRLWLRVLLRLSPMAFRALQGCGAVGDRGLFALYPKTNKDGFRSRLPVPGPRRRNPRTTQHPLALLARVWVLCKGWNWRLARASQGLASHLPPWAIHTLASWGLLRGERPTRIPRLLPRSQRQLGPPASRQPLPGTLAGRRSRTRQSRALPPWR</sequence>
<accession>Q9UL54</accession>
<accession>A5PKY1</accession>
<accession>A7MCZ2</accession>
<accession>B2RN35</accession>
<accession>B7ZM88</accession>
<accession>O94957</accession>
<accession>Q6UW73</accession>
<accession>Q7LC09</accession>
<accession>Q9NSW2</accession>
<keyword id="KW-0025">Alternative splicing</keyword>
<keyword id="KW-0067">ATP-binding</keyword>
<keyword id="KW-0966">Cell projection</keyword>
<keyword id="KW-0175">Coiled coil</keyword>
<keyword id="KW-0963">Cytoplasm</keyword>
<keyword id="KW-0968">Cytoplasmic vesicle</keyword>
<keyword id="KW-0206">Cytoskeleton</keyword>
<keyword id="KW-0418">Kinase</keyword>
<keyword id="KW-0460">Magnesium</keyword>
<keyword id="KW-0472">Membrane</keyword>
<keyword id="KW-0547">Nucleotide-binding</keyword>
<keyword id="KW-0539">Nucleus</keyword>
<keyword id="KW-0597">Phosphoprotein</keyword>
<keyword id="KW-1267">Proteomics identification</keyword>
<keyword id="KW-1185">Reference proteome</keyword>
<keyword id="KW-0723">Serine/threonine-protein kinase</keyword>
<keyword id="KW-0808">Transferase</keyword>
<keyword id="KW-0812">Transmembrane</keyword>
<keyword id="KW-1133">Transmembrane helix</keyword>